<organism>
    <name type="scientific">Corynebacterium glutamicum (strain R)</name>
    <dbReference type="NCBI Taxonomy" id="340322"/>
    <lineage>
        <taxon>Bacteria</taxon>
        <taxon>Bacillati</taxon>
        <taxon>Actinomycetota</taxon>
        <taxon>Actinomycetes</taxon>
        <taxon>Mycobacteriales</taxon>
        <taxon>Corynebacteriaceae</taxon>
        <taxon>Corynebacterium</taxon>
    </lineage>
</organism>
<comment type="function">
    <text evidence="1">One of the primary rRNA binding proteins, this protein initially binds near the 5'-end of the 23S rRNA. It is important during the early stages of 50S assembly. It makes multiple contacts with different domains of the 23S rRNA in the assembled 50S subunit and ribosome.</text>
</comment>
<comment type="function">
    <text evidence="1">Forms part of the polypeptide exit tunnel.</text>
</comment>
<comment type="subunit">
    <text evidence="1">Part of the 50S ribosomal subunit.</text>
</comment>
<comment type="similarity">
    <text evidence="1">Belongs to the universal ribosomal protein uL4 family.</text>
</comment>
<gene>
    <name evidence="1" type="primary">rplD</name>
    <name type="ordered locus">cgR_0608</name>
</gene>
<sequence length="218" mass="23609">MTNLKLDVQTADGNINGSVELPAEIFDREVSVALLHQVVNAQLAAARQGTHSTKTRGEVRGGGRKPFRQKGTGRARQGSIRAPHFTGGGISHGPKPRDYSQRTPKKMIKAALYGALSDRARNARIHVVSELVPGQTPSTKSAKAFIERLTERKSVLLVVSREDINAQKSANNLPGVHILAADQLNTYDVLKSDDVVFSVEALHTFINRASGAAQEEQN</sequence>
<feature type="chain" id="PRO_1000052389" description="Large ribosomal subunit protein uL4">
    <location>
        <begin position="1"/>
        <end position="218"/>
    </location>
</feature>
<feature type="region of interest" description="Disordered" evidence="2">
    <location>
        <begin position="46"/>
        <end position="102"/>
    </location>
</feature>
<feature type="compositionally biased region" description="Basic residues" evidence="2">
    <location>
        <begin position="62"/>
        <end position="73"/>
    </location>
</feature>
<name>RL4_CORGB</name>
<keyword id="KW-0687">Ribonucleoprotein</keyword>
<keyword id="KW-0689">Ribosomal protein</keyword>
<keyword id="KW-0694">RNA-binding</keyword>
<keyword id="KW-0699">rRNA-binding</keyword>
<accession>A4QBI0</accession>
<evidence type="ECO:0000255" key="1">
    <source>
        <dbReference type="HAMAP-Rule" id="MF_01328"/>
    </source>
</evidence>
<evidence type="ECO:0000256" key="2">
    <source>
        <dbReference type="SAM" id="MobiDB-lite"/>
    </source>
</evidence>
<evidence type="ECO:0000305" key="3"/>
<protein>
    <recommendedName>
        <fullName evidence="1">Large ribosomal subunit protein uL4</fullName>
    </recommendedName>
    <alternativeName>
        <fullName evidence="3">50S ribosomal protein L4</fullName>
    </alternativeName>
</protein>
<dbReference type="EMBL" id="AP009044">
    <property type="protein sequence ID" value="BAF53577.1"/>
    <property type="molecule type" value="Genomic_DNA"/>
</dbReference>
<dbReference type="RefSeq" id="WP_003854293.1">
    <property type="nucleotide sequence ID" value="NC_009342.1"/>
</dbReference>
<dbReference type="SMR" id="A4QBI0"/>
<dbReference type="GeneID" id="1021511"/>
<dbReference type="KEGG" id="cgt:cgR_0608"/>
<dbReference type="HOGENOM" id="CLU_041575_5_0_11"/>
<dbReference type="PhylomeDB" id="A4QBI0"/>
<dbReference type="Proteomes" id="UP000006698">
    <property type="component" value="Chromosome"/>
</dbReference>
<dbReference type="GO" id="GO:1990904">
    <property type="term" value="C:ribonucleoprotein complex"/>
    <property type="evidence" value="ECO:0007669"/>
    <property type="project" value="UniProtKB-KW"/>
</dbReference>
<dbReference type="GO" id="GO:0005840">
    <property type="term" value="C:ribosome"/>
    <property type="evidence" value="ECO:0007669"/>
    <property type="project" value="UniProtKB-KW"/>
</dbReference>
<dbReference type="GO" id="GO:0019843">
    <property type="term" value="F:rRNA binding"/>
    <property type="evidence" value="ECO:0007669"/>
    <property type="project" value="UniProtKB-UniRule"/>
</dbReference>
<dbReference type="GO" id="GO:0003735">
    <property type="term" value="F:structural constituent of ribosome"/>
    <property type="evidence" value="ECO:0007669"/>
    <property type="project" value="InterPro"/>
</dbReference>
<dbReference type="GO" id="GO:0006412">
    <property type="term" value="P:translation"/>
    <property type="evidence" value="ECO:0007669"/>
    <property type="project" value="UniProtKB-UniRule"/>
</dbReference>
<dbReference type="FunFam" id="3.40.1370.10:FF:000004">
    <property type="entry name" value="50S ribosomal protein L4"/>
    <property type="match status" value="1"/>
</dbReference>
<dbReference type="Gene3D" id="3.40.1370.10">
    <property type="match status" value="1"/>
</dbReference>
<dbReference type="HAMAP" id="MF_01328_B">
    <property type="entry name" value="Ribosomal_uL4_B"/>
    <property type="match status" value="1"/>
</dbReference>
<dbReference type="InterPro" id="IPR002136">
    <property type="entry name" value="Ribosomal_uL4"/>
</dbReference>
<dbReference type="InterPro" id="IPR013005">
    <property type="entry name" value="Ribosomal_uL4-like"/>
</dbReference>
<dbReference type="InterPro" id="IPR023574">
    <property type="entry name" value="Ribosomal_uL4_dom_sf"/>
</dbReference>
<dbReference type="NCBIfam" id="TIGR03953">
    <property type="entry name" value="rplD_bact"/>
    <property type="match status" value="1"/>
</dbReference>
<dbReference type="PANTHER" id="PTHR10746">
    <property type="entry name" value="50S RIBOSOMAL PROTEIN L4"/>
    <property type="match status" value="1"/>
</dbReference>
<dbReference type="PANTHER" id="PTHR10746:SF6">
    <property type="entry name" value="LARGE RIBOSOMAL SUBUNIT PROTEIN UL4M"/>
    <property type="match status" value="1"/>
</dbReference>
<dbReference type="Pfam" id="PF00573">
    <property type="entry name" value="Ribosomal_L4"/>
    <property type="match status" value="1"/>
</dbReference>
<dbReference type="SUPFAM" id="SSF52166">
    <property type="entry name" value="Ribosomal protein L4"/>
    <property type="match status" value="1"/>
</dbReference>
<reference key="1">
    <citation type="journal article" date="2007" name="Microbiology">
        <title>Comparative analysis of the Corynebacterium glutamicum group and complete genome sequence of strain R.</title>
        <authorList>
            <person name="Yukawa H."/>
            <person name="Omumasaba C.A."/>
            <person name="Nonaka H."/>
            <person name="Kos P."/>
            <person name="Okai N."/>
            <person name="Suzuki N."/>
            <person name="Suda M."/>
            <person name="Tsuge Y."/>
            <person name="Watanabe J."/>
            <person name="Ikeda Y."/>
            <person name="Vertes A.A."/>
            <person name="Inui M."/>
        </authorList>
    </citation>
    <scope>NUCLEOTIDE SEQUENCE [LARGE SCALE GENOMIC DNA]</scope>
    <source>
        <strain>R</strain>
    </source>
</reference>
<proteinExistence type="inferred from homology"/>